<gene>
    <name evidence="19" type="primary">Cttn</name>
</gene>
<dbReference type="EMBL" id="AABR06009380">
    <property type="status" value="NOT_ANNOTATED_CDS"/>
    <property type="molecule type" value="Genomic_DNA"/>
</dbReference>
<dbReference type="EMBL" id="AABR06009448">
    <property type="status" value="NOT_ANNOTATED_CDS"/>
    <property type="molecule type" value="Genomic_DNA"/>
</dbReference>
<dbReference type="EMBL" id="CH473953">
    <property type="protein sequence ID" value="EDM12238.1"/>
    <property type="molecule type" value="Genomic_DNA"/>
</dbReference>
<dbReference type="EMBL" id="BC081802">
    <property type="protein sequence ID" value="AAH81802.1"/>
    <property type="molecule type" value="mRNA"/>
</dbReference>
<dbReference type="RefSeq" id="NP_068640.2">
    <property type="nucleotide sequence ID" value="NM_021868.3"/>
</dbReference>
<dbReference type="RefSeq" id="XP_017445759.1">
    <property type="nucleotide sequence ID" value="XM_017590270.1"/>
</dbReference>
<dbReference type="RefSeq" id="XP_063128591.1">
    <property type="nucleotide sequence ID" value="XM_063272521.1"/>
</dbReference>
<dbReference type="RefSeq" id="XP_063128593.1">
    <property type="nucleotide sequence ID" value="XM_063272523.1"/>
</dbReference>
<dbReference type="SMR" id="Q66HL2"/>
<dbReference type="FunCoup" id="Q66HL2">
    <property type="interactions" value="2713"/>
</dbReference>
<dbReference type="IntAct" id="Q66HL2">
    <property type="interactions" value="7"/>
</dbReference>
<dbReference type="MINT" id="Q66HL2"/>
<dbReference type="STRING" id="10116.ENSRNOP00000050255"/>
<dbReference type="iPTMnet" id="Q66HL2"/>
<dbReference type="jPOST" id="Q66HL2"/>
<dbReference type="PaxDb" id="10116-ENSRNOP00000028283"/>
<dbReference type="GeneID" id="60465"/>
<dbReference type="KEGG" id="rno:60465"/>
<dbReference type="UCSC" id="RGD:619839">
    <property type="organism name" value="rat"/>
</dbReference>
<dbReference type="AGR" id="RGD:619839"/>
<dbReference type="CTD" id="2017"/>
<dbReference type="RGD" id="619839">
    <property type="gene designation" value="Cttn"/>
</dbReference>
<dbReference type="VEuPathDB" id="HostDB:ENSRNOG00000050994"/>
<dbReference type="eggNOG" id="ENOG502QS6C">
    <property type="taxonomic scope" value="Eukaryota"/>
</dbReference>
<dbReference type="HOGENOM" id="CLU_019379_1_0_1"/>
<dbReference type="InParanoid" id="Q66HL2"/>
<dbReference type="PhylomeDB" id="Q66HL2"/>
<dbReference type="TreeFam" id="TF318935"/>
<dbReference type="PRO" id="PR:Q66HL2"/>
<dbReference type="Proteomes" id="UP000002494">
    <property type="component" value="Chromosome 1"/>
</dbReference>
<dbReference type="Proteomes" id="UP000234681">
    <property type="component" value="Chromosome 1"/>
</dbReference>
<dbReference type="Bgee" id="ENSRNOG00000047280">
    <property type="expression patterns" value="Expressed in ovary and 19 other cell types or tissues"/>
</dbReference>
<dbReference type="ExpressionAtlas" id="Q66HL2">
    <property type="expression patterns" value="baseline and differential"/>
</dbReference>
<dbReference type="GO" id="GO:0005884">
    <property type="term" value="C:actin filament"/>
    <property type="evidence" value="ECO:0000266"/>
    <property type="project" value="RGD"/>
</dbReference>
<dbReference type="GO" id="GO:0005938">
    <property type="term" value="C:cell cortex"/>
    <property type="evidence" value="ECO:0000266"/>
    <property type="project" value="RGD"/>
</dbReference>
<dbReference type="GO" id="GO:0030054">
    <property type="term" value="C:cell junction"/>
    <property type="evidence" value="ECO:0000314"/>
    <property type="project" value="UniProtKB"/>
</dbReference>
<dbReference type="GO" id="GO:0005905">
    <property type="term" value="C:clathrin-coated pit"/>
    <property type="evidence" value="ECO:0000314"/>
    <property type="project" value="UniProtKB"/>
</dbReference>
<dbReference type="GO" id="GO:0030864">
    <property type="term" value="C:cortical actin cytoskeleton"/>
    <property type="evidence" value="ECO:0000318"/>
    <property type="project" value="GO_Central"/>
</dbReference>
<dbReference type="GO" id="GO:0030863">
    <property type="term" value="C:cortical cytoskeleton"/>
    <property type="evidence" value="ECO:0000250"/>
    <property type="project" value="UniProtKB"/>
</dbReference>
<dbReference type="GO" id="GO:0005737">
    <property type="term" value="C:cytoplasm"/>
    <property type="evidence" value="ECO:0000266"/>
    <property type="project" value="RGD"/>
</dbReference>
<dbReference type="GO" id="GO:0043197">
    <property type="term" value="C:dendritic spine"/>
    <property type="evidence" value="ECO:0007669"/>
    <property type="project" value="UniProtKB-SubCell"/>
</dbReference>
<dbReference type="GO" id="GO:0005783">
    <property type="term" value="C:endoplasmic reticulum"/>
    <property type="evidence" value="ECO:0007669"/>
    <property type="project" value="UniProtKB-SubCell"/>
</dbReference>
<dbReference type="GO" id="GO:0005925">
    <property type="term" value="C:focal adhesion"/>
    <property type="evidence" value="ECO:0007669"/>
    <property type="project" value="UniProtKB-SubCell"/>
</dbReference>
<dbReference type="GO" id="GO:0098978">
    <property type="term" value="C:glutamatergic synapse"/>
    <property type="evidence" value="ECO:0000314"/>
    <property type="project" value="SynGO"/>
</dbReference>
<dbReference type="GO" id="GO:0005794">
    <property type="term" value="C:Golgi apparatus"/>
    <property type="evidence" value="ECO:0007669"/>
    <property type="project" value="Ensembl"/>
</dbReference>
<dbReference type="GO" id="GO:0030027">
    <property type="term" value="C:lamellipodium"/>
    <property type="evidence" value="ECO:0000250"/>
    <property type="project" value="UniProtKB"/>
</dbReference>
<dbReference type="GO" id="GO:1990023">
    <property type="term" value="C:mitotic spindle midzone"/>
    <property type="evidence" value="ECO:0000266"/>
    <property type="project" value="RGD"/>
</dbReference>
<dbReference type="GO" id="GO:0005886">
    <property type="term" value="C:plasma membrane"/>
    <property type="evidence" value="ECO:0000318"/>
    <property type="project" value="GO_Central"/>
</dbReference>
<dbReference type="GO" id="GO:0002102">
    <property type="term" value="C:podosome"/>
    <property type="evidence" value="ECO:0000266"/>
    <property type="project" value="RGD"/>
</dbReference>
<dbReference type="GO" id="GO:0098794">
    <property type="term" value="C:postsynapse"/>
    <property type="evidence" value="ECO:0000314"/>
    <property type="project" value="SynGO"/>
</dbReference>
<dbReference type="GO" id="GO:0098871">
    <property type="term" value="C:postsynaptic actin cytoskeleton"/>
    <property type="evidence" value="ECO:0000314"/>
    <property type="project" value="SynGO"/>
</dbReference>
<dbReference type="GO" id="GO:0001726">
    <property type="term" value="C:ruffle"/>
    <property type="evidence" value="ECO:0000266"/>
    <property type="project" value="RGD"/>
</dbReference>
<dbReference type="GO" id="GO:0030427">
    <property type="term" value="C:site of polarized growth"/>
    <property type="evidence" value="ECO:0000318"/>
    <property type="project" value="GO_Central"/>
</dbReference>
<dbReference type="GO" id="GO:0008076">
    <property type="term" value="C:voltage-gated potassium channel complex"/>
    <property type="evidence" value="ECO:0000266"/>
    <property type="project" value="RGD"/>
</dbReference>
<dbReference type="GO" id="GO:0051015">
    <property type="term" value="F:actin filament binding"/>
    <property type="evidence" value="ECO:0000318"/>
    <property type="project" value="GO_Central"/>
</dbReference>
<dbReference type="GO" id="GO:0071933">
    <property type="term" value="F:Arp2/3 complex binding"/>
    <property type="evidence" value="ECO:0000353"/>
    <property type="project" value="RGD"/>
</dbReference>
<dbReference type="GO" id="GO:0005522">
    <property type="term" value="F:profilin binding"/>
    <property type="evidence" value="ECO:0000266"/>
    <property type="project" value="RGD"/>
</dbReference>
<dbReference type="GO" id="GO:0070064">
    <property type="term" value="F:proline-rich region binding"/>
    <property type="evidence" value="ECO:0000353"/>
    <property type="project" value="RGD"/>
</dbReference>
<dbReference type="GO" id="GO:0030036">
    <property type="term" value="P:actin cytoskeleton organization"/>
    <property type="evidence" value="ECO:0000315"/>
    <property type="project" value="UniProtKB"/>
</dbReference>
<dbReference type="GO" id="GO:0016477">
    <property type="term" value="P:cell migration"/>
    <property type="evidence" value="ECO:0000318"/>
    <property type="project" value="GO_Central"/>
</dbReference>
<dbReference type="GO" id="GO:0048870">
    <property type="term" value="P:cell motility"/>
    <property type="evidence" value="ECO:0000315"/>
    <property type="project" value="UniProtKB"/>
</dbReference>
<dbReference type="GO" id="GO:0097062">
    <property type="term" value="P:dendritic spine maintenance"/>
    <property type="evidence" value="ECO:0000266"/>
    <property type="project" value="RGD"/>
</dbReference>
<dbReference type="GO" id="GO:0097191">
    <property type="term" value="P:extrinsic apoptotic signaling pathway"/>
    <property type="evidence" value="ECO:0000266"/>
    <property type="project" value="RGD"/>
</dbReference>
<dbReference type="GO" id="GO:0048041">
    <property type="term" value="P:focal adhesion assembly"/>
    <property type="evidence" value="ECO:0000315"/>
    <property type="project" value="UniProtKB"/>
</dbReference>
<dbReference type="GO" id="GO:0006886">
    <property type="term" value="P:intracellular protein transport"/>
    <property type="evidence" value="ECO:0000250"/>
    <property type="project" value="UniProtKB"/>
</dbReference>
<dbReference type="GO" id="GO:0097581">
    <property type="term" value="P:lamellipodium organization"/>
    <property type="evidence" value="ECO:0000315"/>
    <property type="project" value="UniProtKB"/>
</dbReference>
<dbReference type="GO" id="GO:0098885">
    <property type="term" value="P:modification of postsynaptic actin cytoskeleton"/>
    <property type="evidence" value="ECO:0000314"/>
    <property type="project" value="SynGO"/>
</dbReference>
<dbReference type="GO" id="GO:0099010">
    <property type="term" value="P:modification of postsynaptic structure"/>
    <property type="evidence" value="ECO:0000314"/>
    <property type="project" value="SynGO"/>
</dbReference>
<dbReference type="GO" id="GO:2001237">
    <property type="term" value="P:negative regulation of extrinsic apoptotic signaling pathway"/>
    <property type="evidence" value="ECO:0000266"/>
    <property type="project" value="RGD"/>
</dbReference>
<dbReference type="GO" id="GO:0048812">
    <property type="term" value="P:neuron projection morphogenesis"/>
    <property type="evidence" value="ECO:0000315"/>
    <property type="project" value="UniProtKB"/>
</dbReference>
<dbReference type="GO" id="GO:0030838">
    <property type="term" value="P:positive regulation of actin filament polymerization"/>
    <property type="evidence" value="ECO:0000315"/>
    <property type="project" value="UniProtKB"/>
</dbReference>
<dbReference type="GO" id="GO:0050921">
    <property type="term" value="P:positive regulation of chemotaxis"/>
    <property type="evidence" value="ECO:0000315"/>
    <property type="project" value="RGD"/>
</dbReference>
<dbReference type="GO" id="GO:0045987">
    <property type="term" value="P:positive regulation of smooth muscle contraction"/>
    <property type="evidence" value="ECO:0000266"/>
    <property type="project" value="RGD"/>
</dbReference>
<dbReference type="GO" id="GO:0006898">
    <property type="term" value="P:receptor-mediated endocytosis"/>
    <property type="evidence" value="ECO:0000314"/>
    <property type="project" value="RGD"/>
</dbReference>
<dbReference type="GO" id="GO:0030833">
    <property type="term" value="P:regulation of actin filament polymerization"/>
    <property type="evidence" value="ECO:0000318"/>
    <property type="project" value="GO_Central"/>
</dbReference>
<dbReference type="GO" id="GO:0030516">
    <property type="term" value="P:regulation of axon extension"/>
    <property type="evidence" value="ECO:0000315"/>
    <property type="project" value="UniProtKB"/>
</dbReference>
<dbReference type="GO" id="GO:0060491">
    <property type="term" value="P:regulation of cell projection assembly"/>
    <property type="evidence" value="ECO:0000315"/>
    <property type="project" value="RGD"/>
</dbReference>
<dbReference type="GO" id="GO:1901524">
    <property type="term" value="P:regulation of mitophagy"/>
    <property type="evidence" value="ECO:0000266"/>
    <property type="project" value="RGD"/>
</dbReference>
<dbReference type="GO" id="GO:0006930">
    <property type="term" value="P:substrate-dependent cell migration, cell extension"/>
    <property type="evidence" value="ECO:0000266"/>
    <property type="project" value="RGD"/>
</dbReference>
<dbReference type="CDD" id="cd11959">
    <property type="entry name" value="SH3_Cortactin"/>
    <property type="match status" value="1"/>
</dbReference>
<dbReference type="FunFam" id="2.30.30.40:FF:000087">
    <property type="entry name" value="Src substrate cortactin"/>
    <property type="match status" value="1"/>
</dbReference>
<dbReference type="Gene3D" id="2.30.30.40">
    <property type="entry name" value="SH3 Domains"/>
    <property type="match status" value="1"/>
</dbReference>
<dbReference type="InterPro" id="IPR035716">
    <property type="entry name" value="Cortactin_SH3"/>
</dbReference>
<dbReference type="InterPro" id="IPR003134">
    <property type="entry name" value="Hs1_Cortactin"/>
</dbReference>
<dbReference type="InterPro" id="IPR036028">
    <property type="entry name" value="SH3-like_dom_sf"/>
</dbReference>
<dbReference type="InterPro" id="IPR001452">
    <property type="entry name" value="SH3_domain"/>
</dbReference>
<dbReference type="PANTHER" id="PTHR10829">
    <property type="entry name" value="CORTACTIN AND DREBRIN"/>
    <property type="match status" value="1"/>
</dbReference>
<dbReference type="PANTHER" id="PTHR10829:SF15">
    <property type="entry name" value="SRC SUBSTRATE CORTACTIN"/>
    <property type="match status" value="1"/>
</dbReference>
<dbReference type="Pfam" id="PF02218">
    <property type="entry name" value="HS1_rep"/>
    <property type="match status" value="6"/>
</dbReference>
<dbReference type="Pfam" id="PF14604">
    <property type="entry name" value="SH3_9"/>
    <property type="match status" value="1"/>
</dbReference>
<dbReference type="PRINTS" id="PR00499">
    <property type="entry name" value="P67PHOX"/>
</dbReference>
<dbReference type="PRINTS" id="PR00452">
    <property type="entry name" value="SH3DOMAIN"/>
</dbReference>
<dbReference type="SMART" id="SM00326">
    <property type="entry name" value="SH3"/>
    <property type="match status" value="1"/>
</dbReference>
<dbReference type="SUPFAM" id="SSF50044">
    <property type="entry name" value="SH3-domain"/>
    <property type="match status" value="1"/>
</dbReference>
<dbReference type="PROSITE" id="PS51090">
    <property type="entry name" value="CORTACTIN"/>
    <property type="match status" value="6"/>
</dbReference>
<dbReference type="PROSITE" id="PS50002">
    <property type="entry name" value="SH3"/>
    <property type="match status" value="1"/>
</dbReference>
<keyword id="KW-0007">Acetylation</keyword>
<keyword id="KW-0965">Cell junction</keyword>
<keyword id="KW-1003">Cell membrane</keyword>
<keyword id="KW-0966">Cell projection</keyword>
<keyword id="KW-0168">Coated pit</keyword>
<keyword id="KW-0175">Coiled coil</keyword>
<keyword id="KW-0963">Cytoplasm</keyword>
<keyword id="KW-0206">Cytoskeleton</keyword>
<keyword id="KW-0254">Endocytosis</keyword>
<keyword id="KW-0256">Endoplasmic reticulum</keyword>
<keyword id="KW-1017">Isopeptide bond</keyword>
<keyword id="KW-0472">Membrane</keyword>
<keyword id="KW-0488">Methylation</keyword>
<keyword id="KW-0597">Phosphoprotein</keyword>
<keyword id="KW-1185">Reference proteome</keyword>
<keyword id="KW-0677">Repeat</keyword>
<keyword id="KW-0728">SH3 domain</keyword>
<keyword id="KW-0770">Synapse</keyword>
<keyword id="KW-0832">Ubl conjugation</keyword>
<proteinExistence type="evidence at protein level"/>
<name>SRC8_RAT</name>
<feature type="chain" id="PRO_0000431700" description="Src substrate cortactin">
    <location>
        <begin position="1"/>
        <end position="509"/>
    </location>
</feature>
<feature type="repeat" description="Cortactin 1" evidence="7">
    <location>
        <begin position="80"/>
        <end position="116"/>
    </location>
</feature>
<feature type="repeat" description="Cortactin 2" evidence="7">
    <location>
        <begin position="117"/>
        <end position="153"/>
    </location>
</feature>
<feature type="repeat" description="Cortactin 3" evidence="7">
    <location>
        <begin position="154"/>
        <end position="190"/>
    </location>
</feature>
<feature type="repeat" description="Cortactin 4" evidence="7">
    <location>
        <begin position="191"/>
        <end position="227"/>
    </location>
</feature>
<feature type="repeat" description="Cortactin 5" evidence="7">
    <location>
        <begin position="228"/>
        <end position="264"/>
    </location>
</feature>
<feature type="repeat" description="Cortactin 6; truncated" evidence="7">
    <location>
        <begin position="265"/>
        <end position="287"/>
    </location>
</feature>
<feature type="domain" description="SH3" evidence="6">
    <location>
        <begin position="451"/>
        <end position="509"/>
    </location>
</feature>
<feature type="region of interest" description="Disordered" evidence="8">
    <location>
        <begin position="1"/>
        <end position="28"/>
    </location>
</feature>
<feature type="region of interest" description="Disordered" evidence="8">
    <location>
        <begin position="318"/>
        <end position="409"/>
    </location>
</feature>
<feature type="coiled-coil region" evidence="5">
    <location>
        <begin position="311"/>
        <end position="364"/>
    </location>
</feature>
<feature type="compositionally biased region" description="Acidic residues" evidence="8">
    <location>
        <begin position="17"/>
        <end position="28"/>
    </location>
</feature>
<feature type="compositionally biased region" description="Basic and acidic residues" evidence="8">
    <location>
        <begin position="320"/>
        <end position="359"/>
    </location>
</feature>
<feature type="compositionally biased region" description="Low complexity" evidence="8">
    <location>
        <begin position="393"/>
        <end position="406"/>
    </location>
</feature>
<feature type="modified residue" description="N6-acetyllysine" evidence="3">
    <location>
        <position position="87"/>
    </location>
</feature>
<feature type="modified residue" description="N6-acetyllysine" evidence="4">
    <location>
        <position position="107"/>
    </location>
</feature>
<feature type="modified residue" description="Phosphoserine" evidence="4">
    <location>
        <position position="113"/>
    </location>
</feature>
<feature type="modified residue" description="Omega-N-methylarginine" evidence="4">
    <location>
        <position position="119"/>
    </location>
</feature>
<feature type="modified residue" description="N6-acetyllysine" evidence="4">
    <location>
        <position position="124"/>
    </location>
</feature>
<feature type="modified residue" description="N6-acetyllysine; alternate" evidence="4">
    <location>
        <position position="144"/>
    </location>
</feature>
<feature type="modified residue" description="Phosphoserine" evidence="3">
    <location>
        <position position="150"/>
    </location>
</feature>
<feature type="modified residue" description="N6-acetyllysine" evidence="4">
    <location>
        <position position="152"/>
    </location>
</feature>
<feature type="modified residue" description="N6-acetyllysine" evidence="4">
    <location>
        <position position="161"/>
    </location>
</feature>
<feature type="modified residue" description="N6-acetyllysine" evidence="4">
    <location>
        <position position="171"/>
    </location>
</feature>
<feature type="modified residue" description="N6-acetyllysine; alternate" evidence="4">
    <location>
        <position position="181"/>
    </location>
</feature>
<feature type="modified residue" description="N6-acetyllysine" evidence="4">
    <location>
        <position position="193"/>
    </location>
</feature>
<feature type="modified residue" description="N6-acetyllysine" evidence="3">
    <location>
        <position position="198"/>
    </location>
</feature>
<feature type="modified residue" description="N6-acetyllysine" evidence="3">
    <location>
        <position position="235"/>
    </location>
</feature>
<feature type="modified residue" description="Phosphoserine" evidence="3">
    <location>
        <position position="261"/>
    </location>
</feature>
<feature type="modified residue" description="N6-acetyllysine" evidence="3">
    <location>
        <position position="267"/>
    </location>
</feature>
<feature type="modified residue" description="N6-acetyllysine" evidence="3">
    <location>
        <position position="272"/>
    </location>
</feature>
<feature type="modified residue" description="N6-acetyllysine" evidence="4">
    <location>
        <position position="277"/>
    </location>
</feature>
<feature type="modified residue" description="N6-acetyllysine" evidence="4">
    <location>
        <position position="309"/>
    </location>
</feature>
<feature type="modified residue" description="Phosphothreonine" evidence="20">
    <location>
        <position position="364"/>
    </location>
</feature>
<feature type="modified residue" description="Phosphoserine" evidence="20">
    <location>
        <position position="368"/>
    </location>
</feature>
<feature type="modified residue" description="Phosphoserine" evidence="20">
    <location>
        <position position="370"/>
    </location>
</feature>
<feature type="modified residue" description="Phosphoserine" evidence="3">
    <location>
        <position position="380"/>
    </location>
</feature>
<feature type="modified residue" description="Phosphoserine" evidence="3">
    <location>
        <position position="381"/>
    </location>
</feature>
<feature type="modified residue" description="Phosphotyrosine; by FAK1" evidence="15">
    <location>
        <position position="384"/>
    </location>
</feature>
<feature type="modified residue" description="Phosphotyrosine" evidence="3">
    <location>
        <position position="405"/>
    </location>
</feature>
<feature type="modified residue" description="Phosphoserine" evidence="3">
    <location>
        <position position="406"/>
    </location>
</feature>
<feature type="modified residue" description="Phosphotyrosine; by FAK1" evidence="15">
    <location>
        <position position="429"/>
    </location>
</feature>
<feature type="modified residue" description="Phosphotyrosine; by FAK1" evidence="15">
    <location>
        <position position="445"/>
    </location>
</feature>
<feature type="modified residue" description="Phosphotyrosine; by SRC" evidence="4">
    <location>
        <position position="445"/>
    </location>
</feature>
<feature type="modified residue" description="Phosphotyrosine; by SRC" evidence="4">
    <location>
        <position position="448"/>
    </location>
</feature>
<feature type="cross-link" description="Glycyl lysine isopeptide (Lys-Gly) (interchain with G-Cter in SUMO1); alternate" evidence="3">
    <location>
        <position position="144"/>
    </location>
</feature>
<feature type="cross-link" description="Glycyl lysine isopeptide (Lys-Gly) (interchain with G-Cter in SUMO2); alternate" evidence="3">
    <location>
        <position position="144"/>
    </location>
</feature>
<feature type="cross-link" description="Glycyl lysine isopeptide (Lys-Gly) (interchain with G-Cter in SUMO1); alternate" evidence="3">
    <location>
        <position position="181"/>
    </location>
</feature>
<feature type="cross-link" description="Glycyl lysine isopeptide (Lys-Gly) (interchain with G-Cter in SUMO2); alternate" evidence="3">
    <location>
        <position position="181"/>
    </location>
</feature>
<feature type="cross-link" description="Glycyl lysine isopeptide (Lys-Gly) (interchain with G-Cter in SUMO1)" evidence="3">
    <location>
        <position position="218"/>
    </location>
</feature>
<feature type="mutagenesis site" description="Inhibits actin polymerization; when associated with A-381." evidence="12">
    <original>S</original>
    <variation>A</variation>
    <location>
        <position position="368"/>
    </location>
</feature>
<feature type="mutagenesis site" description="Inhibits actin polymerization; when associated with A-368." evidence="12">
    <original>S</original>
    <variation>A</variation>
    <location>
        <position position="381"/>
    </location>
</feature>
<feature type="mutagenesis site" description="Promotes reorganization of the actin cytoskeleton and cell motility; when associated with E-429 and E-445." evidence="12">
    <original>Y</original>
    <variation>E</variation>
    <location>
        <position position="384"/>
    </location>
</feature>
<feature type="mutagenesis site" description="Impairs receptor-mediated endocytosis. Increases the stability of focal adhesion and decreases their turnover; when associated with F-429 and F-445." evidence="13 15">
    <original>Y</original>
    <variation>F</variation>
    <location>
        <position position="384"/>
    </location>
</feature>
<feature type="mutagenesis site" description="Promotes reorganization of the actin cytoskeleton and cell motility; when associated with E-384 and E-445." evidence="12">
    <original>Y</original>
    <variation>E</variation>
    <location>
        <position position="429"/>
    </location>
</feature>
<feature type="mutagenesis site" description="Impairs receptor-mediated endocytosis. Increases the stability of focal adhesion and decreases their turnover; when associated with F-384 and F-445." evidence="13 15">
    <original>Y</original>
    <variation>F</variation>
    <location>
        <position position="429"/>
    </location>
</feature>
<feature type="mutagenesis site" description="Promotes reorganization of the actin cytoskeleton and cell motility; when associated with E-384 and E-429." evidence="12">
    <original>Y</original>
    <variation>E</variation>
    <location>
        <position position="445"/>
    </location>
</feature>
<feature type="mutagenesis site" description="Impairs receptor-mediated endocytosis. Increases the stability of focal adhesion and decreases their turnover; when associated with F-384 and F-429." evidence="13 15">
    <original>Y</original>
    <variation>F</variation>
    <location>
        <position position="445"/>
    </location>
</feature>
<comment type="function">
    <text evidence="3 10 12 13 14 15">Contributes to the organization of the actin cytoskeleton and cell shape (PubMed:18768925). Plays a role in the formation of lamellipodia and in cell migration (PubMed:18768925). Plays a role in the regulation of neuron morphology, axon growth and formation of neuronal growth cones (PubMed:21210813). Through its interaction with CTTNBP2, involved in the regulation of neuronal spine density (By similarity). Plays a role in focal adhesion assembly and turnover (PubMed:18768925, PubMed:22952866). In complex with ABL1 and MYLK regulates cortical actin-based cytoskeletal rearrangement critical to sphingosine 1-phosphate (S1P)-mediated endothelial cell (EC) barrier enhancement (By similarity). Plays a role in intracellular protein transport and endocytosis, and in modulating the levels of potassium channels present at the cell membrane (By similarity). Plays a role in receptor-mediated endocytosis via clathrin-coated pits (PubMed:12612086, PubMed:19995918). Required for stabilization of KCNH1 channels at the cell membrane (By similarity).</text>
</comment>
<comment type="subunit">
    <text evidence="3 4 9 11 14 15 16">Part of a complex composed of NEDD9, AURKA and CTTN; within the complex NEDD9 acts as a scaffold protein and is required for complex formation (By similarity). Interacts (via N-terminus) with NEDD9 (By similarity). Identified in a complex containing FGFR4, NCAM1, CDH2, PLCG1, FRS2, SRC, SHC1, GAP43 and CTTN. Forms a complex with ABL1 and MYLK (By similarity). Interacts with SHANK2 and SHANK3 (via its SH3 domain). Interacts with PLXDC2 and SRCIN1. Interacts with SAMSN1 (via SH3 domain). Interacts (via SH3 domain) with ASAP1 (via Pro-rich region). Interacts with FER. Interacts with FGD1. Interacts with ABL2. Interacts with CTTNBP2NL; this interaction may target CTTN to stress fibers. Interacts with CTTNBP2; this interaction may target CTTN at the cell cortex or dendritic spines (By similarity). Interacts (via SH3 domain) with DNM2 (PubMed:21210813). Interacts with ACTN1 (PubMed:21210813). Interacts with KCNA2 (via non-phosphorylated C-terminus) (PubMed:12151401, PubMed:17959782). Interacts with PTK2/FAK1 (PubMed:22952866). Interacts with KCNH1 (PubMed:23144454). Interacts (via SH3 domain) with DIP2A (via N-terminus); the interaction enhances CTTN acetylation and is required for proper synaptic transmission (By similarity). Interacts with XIRP1 (via N-terminus); the interaction promotes CTTN localization to intercalated disks in cardiomyocytes (By similarity).</text>
</comment>
<comment type="interaction">
    <interactant intactId="EBI-6273816">
        <id>Q66HL2</id>
    </interactant>
    <interactant intactId="EBI-917556">
        <id>P45592</id>
        <label>Cfl1</label>
    </interactant>
    <organismsDiffer>false</organismsDiffer>
    <experiments>4</experiments>
</comment>
<comment type="subcellular location">
    <subcellularLocation>
        <location evidence="3">Cytoplasm</location>
        <location evidence="3">Cytoskeleton</location>
    </subcellularLocation>
    <subcellularLocation>
        <location evidence="3">Cell projection</location>
        <location evidence="3">Lamellipodium</location>
    </subcellularLocation>
    <subcellularLocation>
        <location evidence="1">Cell projection</location>
        <location evidence="1">Ruffle</location>
    </subcellularLocation>
    <subcellularLocation>
        <location>Cell projection</location>
        <location>Dendrite</location>
    </subcellularLocation>
    <subcellularLocation>
        <location evidence="14">Cell projection</location>
    </subcellularLocation>
    <subcellularLocation>
        <location evidence="10 13 14">Cell membrane</location>
        <topology evidence="17">Peripheral membrane protein</topology>
        <orientation evidence="17">Cytoplasmic side</orientation>
    </subcellularLocation>
    <subcellularLocation>
        <location evidence="2">Cell projection</location>
        <location evidence="2">Podosome</location>
    </subcellularLocation>
    <subcellularLocation>
        <location evidence="14">Cell junction</location>
    </subcellularLocation>
    <subcellularLocation>
        <location evidence="12 15">Cell junction</location>
        <location evidence="12 15">Focal adhesion</location>
    </subcellularLocation>
    <subcellularLocation>
        <location evidence="10 13">Membrane</location>
        <location evidence="10 13">Clathrin-coated pit</location>
    </subcellularLocation>
    <subcellularLocation>
        <location evidence="1">Cell projection</location>
        <location evidence="1">Dendritic spine</location>
    </subcellularLocation>
    <subcellularLocation>
        <location evidence="10">Cytoplasm</location>
        <location evidence="10">Cell cortex</location>
    </subcellularLocation>
    <subcellularLocation>
        <location evidence="2">Endoplasmic reticulum</location>
    </subcellularLocation>
    <text evidence="1 14 15">Colocalizes transiently with PTK2/FAK1 at focal adhesions (PubMed:22952866). Associated with membrane ruffles and lamellipodia. In the presence of CTTNBP2NL, colocalizes with stress fibers. In the presence of CTTNBP2, localizes at the cell cortex. In response to neuronal activation by glutamate, redistributes from dendritic spines to the dendritic shaft (By similarity). Colocalizes with DNM2 at the basis of filopodia in hippocampus neuron growth zones (PubMed:21210813).</text>
</comment>
<comment type="tissue specificity">
    <text evidence="10">Detected in liver (at protein level).</text>
</comment>
<comment type="domain">
    <text evidence="17">The SH3 motif may mediate binding to the cytoskeleton.</text>
</comment>
<comment type="PTM">
    <text evidence="3">Acetylated.</text>
</comment>
<comment type="PTM">
    <text evidence="3 4 9 13 15">Phosphorylated by FER. Phosphorylated in response to FGR activation. Phosphorylation by SRC promotes MYLK binding (By similarity). Tyrosine phosphorylation in transformed cells may contribute to cellular growth regulation and transformation. Phosphorylated by PKN2 at both serine and threonine residues in a GTP-bound Rac1-dependent manner in hyaluronan-induced astrocytes and hence down-regulated CTTN ability to associate with filamentous actin (By similarity). Phosphorylated on tyrosine residues in response to CHRM1 activation (PubMed:12151401). Phosphorylated by PTK2/FAK1 in response to cell adhesion (PubMed:22952866).</text>
</comment>
<sequence>MWKASAGHAVSITQDDGGADDWETDPDFVNDVSEKEQRWGAKTVQGSGHQEHINIHKLRENVFQEHQTLKEKELETGPKASHGYGGKFGVEQDRMDKSAVGHEYQSKLSKHCSQVDSVRGFGGKFGVQMDRVDQSAVGFEYQGKTEKHASQKDYSSGFGGKYGVQADRVDKSAVGFDYQGKTEKHESQKDYSKGFGGKYGIDKDKVDKSAVGFEYQGKTEKHESQKDYVKGFGGKFGVQTDRQDKCALGWDHQEKLQLHESQKDYAKGFGGKYGVQKDRMDKNASTFEEVVQVPSAYQKTVPIEAVTSKTSNIRANFENLAKEREQEDRRKAEAERAQRMAQERQEQEEARRKLEEQARAKKQTPPASPSPQPAEDRPPSSPIYEDAAPLKAEPSYGSSEPEPEYSTEAAGLPEASNQQGLAYTSEPVYETTEVPGHYQAEDDTYDGYESDLGITAIALYDYQAAGDDEISFDPDDVITNIEMIDDGWWRGVCKGRYGLFPANYVELRQ</sequence>
<evidence type="ECO:0000250" key="1"/>
<evidence type="ECO:0000250" key="2">
    <source>
        <dbReference type="UniProtKB" id="Q01406"/>
    </source>
</evidence>
<evidence type="ECO:0000250" key="3">
    <source>
        <dbReference type="UniProtKB" id="Q14247"/>
    </source>
</evidence>
<evidence type="ECO:0000250" key="4">
    <source>
        <dbReference type="UniProtKB" id="Q60598"/>
    </source>
</evidence>
<evidence type="ECO:0000255" key="5"/>
<evidence type="ECO:0000255" key="6">
    <source>
        <dbReference type="PROSITE-ProRule" id="PRU00192"/>
    </source>
</evidence>
<evidence type="ECO:0000255" key="7">
    <source>
        <dbReference type="PROSITE-ProRule" id="PRU00413"/>
    </source>
</evidence>
<evidence type="ECO:0000256" key="8">
    <source>
        <dbReference type="SAM" id="MobiDB-lite"/>
    </source>
</evidence>
<evidence type="ECO:0000269" key="9">
    <source>
    </source>
</evidence>
<evidence type="ECO:0000269" key="10">
    <source>
    </source>
</evidence>
<evidence type="ECO:0000269" key="11">
    <source>
    </source>
</evidence>
<evidence type="ECO:0000269" key="12">
    <source>
    </source>
</evidence>
<evidence type="ECO:0000269" key="13">
    <source>
    </source>
</evidence>
<evidence type="ECO:0000269" key="14">
    <source>
    </source>
</evidence>
<evidence type="ECO:0000269" key="15">
    <source>
    </source>
</evidence>
<evidence type="ECO:0000269" key="16">
    <source>
    </source>
</evidence>
<evidence type="ECO:0000305" key="17"/>
<evidence type="ECO:0000312" key="18">
    <source>
        <dbReference type="EMBL" id="AAH81802.1"/>
    </source>
</evidence>
<evidence type="ECO:0000312" key="19">
    <source>
        <dbReference type="RGD" id="619839"/>
    </source>
</evidence>
<evidence type="ECO:0007744" key="20">
    <source>
    </source>
</evidence>
<organism evidence="18">
    <name type="scientific">Rattus norvegicus</name>
    <name type="common">Rat</name>
    <dbReference type="NCBI Taxonomy" id="10116"/>
    <lineage>
        <taxon>Eukaryota</taxon>
        <taxon>Metazoa</taxon>
        <taxon>Chordata</taxon>
        <taxon>Craniata</taxon>
        <taxon>Vertebrata</taxon>
        <taxon>Euteleostomi</taxon>
        <taxon>Mammalia</taxon>
        <taxon>Eutheria</taxon>
        <taxon>Euarchontoglires</taxon>
        <taxon>Glires</taxon>
        <taxon>Rodentia</taxon>
        <taxon>Myomorpha</taxon>
        <taxon>Muroidea</taxon>
        <taxon>Muridae</taxon>
        <taxon>Murinae</taxon>
        <taxon>Rattus</taxon>
    </lineage>
</organism>
<reference key="1">
    <citation type="journal article" date="2004" name="Nature">
        <title>Genome sequence of the Brown Norway rat yields insights into mammalian evolution.</title>
        <authorList>
            <person name="Gibbs R.A."/>
            <person name="Weinstock G.M."/>
            <person name="Metzker M.L."/>
            <person name="Muzny D.M."/>
            <person name="Sodergren E.J."/>
            <person name="Scherer S."/>
            <person name="Scott G."/>
            <person name="Steffen D."/>
            <person name="Worley K.C."/>
            <person name="Burch P.E."/>
            <person name="Okwuonu G."/>
            <person name="Hines S."/>
            <person name="Lewis L."/>
            <person name="Deramo C."/>
            <person name="Delgado O."/>
            <person name="Dugan-Rocha S."/>
            <person name="Miner G."/>
            <person name="Morgan M."/>
            <person name="Hawes A."/>
            <person name="Gill R."/>
            <person name="Holt R.A."/>
            <person name="Adams M.D."/>
            <person name="Amanatides P.G."/>
            <person name="Baden-Tillson H."/>
            <person name="Barnstead M."/>
            <person name="Chin S."/>
            <person name="Evans C.A."/>
            <person name="Ferriera S."/>
            <person name="Fosler C."/>
            <person name="Glodek A."/>
            <person name="Gu Z."/>
            <person name="Jennings D."/>
            <person name="Kraft C.L."/>
            <person name="Nguyen T."/>
            <person name="Pfannkoch C.M."/>
            <person name="Sitter C."/>
            <person name="Sutton G.G."/>
            <person name="Venter J.C."/>
            <person name="Woodage T."/>
            <person name="Smith D."/>
            <person name="Lee H.-M."/>
            <person name="Gustafson E."/>
            <person name="Cahill P."/>
            <person name="Kana A."/>
            <person name="Doucette-Stamm L."/>
            <person name="Weinstock K."/>
            <person name="Fechtel K."/>
            <person name="Weiss R.B."/>
            <person name="Dunn D.M."/>
            <person name="Green E.D."/>
            <person name="Blakesley R.W."/>
            <person name="Bouffard G.G."/>
            <person name="De Jong P.J."/>
            <person name="Osoegawa K."/>
            <person name="Zhu B."/>
            <person name="Marra M."/>
            <person name="Schein J."/>
            <person name="Bosdet I."/>
            <person name="Fjell C."/>
            <person name="Jones S."/>
            <person name="Krzywinski M."/>
            <person name="Mathewson C."/>
            <person name="Siddiqui A."/>
            <person name="Wye N."/>
            <person name="McPherson J."/>
            <person name="Zhao S."/>
            <person name="Fraser C.M."/>
            <person name="Shetty J."/>
            <person name="Shatsman S."/>
            <person name="Geer K."/>
            <person name="Chen Y."/>
            <person name="Abramzon S."/>
            <person name="Nierman W.C."/>
            <person name="Havlak P.H."/>
            <person name="Chen R."/>
            <person name="Durbin K.J."/>
            <person name="Egan A."/>
            <person name="Ren Y."/>
            <person name="Song X.-Z."/>
            <person name="Li B."/>
            <person name="Liu Y."/>
            <person name="Qin X."/>
            <person name="Cawley S."/>
            <person name="Cooney A.J."/>
            <person name="D'Souza L.M."/>
            <person name="Martin K."/>
            <person name="Wu J.Q."/>
            <person name="Gonzalez-Garay M.L."/>
            <person name="Jackson A.R."/>
            <person name="Kalafus K.J."/>
            <person name="McLeod M.P."/>
            <person name="Milosavljevic A."/>
            <person name="Virk D."/>
            <person name="Volkov A."/>
            <person name="Wheeler D.A."/>
            <person name="Zhang Z."/>
            <person name="Bailey J.A."/>
            <person name="Eichler E.E."/>
            <person name="Tuzun E."/>
            <person name="Birney E."/>
            <person name="Mongin E."/>
            <person name="Ureta-Vidal A."/>
            <person name="Woodwark C."/>
            <person name="Zdobnov E."/>
            <person name="Bork P."/>
            <person name="Suyama M."/>
            <person name="Torrents D."/>
            <person name="Alexandersson M."/>
            <person name="Trask B.J."/>
            <person name="Young J.M."/>
            <person name="Huang H."/>
            <person name="Wang H."/>
            <person name="Xing H."/>
            <person name="Daniels S."/>
            <person name="Gietzen D."/>
            <person name="Schmidt J."/>
            <person name="Stevens K."/>
            <person name="Vitt U."/>
            <person name="Wingrove J."/>
            <person name="Camara F."/>
            <person name="Mar Alba M."/>
            <person name="Abril J.F."/>
            <person name="Guigo R."/>
            <person name="Smit A."/>
            <person name="Dubchak I."/>
            <person name="Rubin E.M."/>
            <person name="Couronne O."/>
            <person name="Poliakov A."/>
            <person name="Huebner N."/>
            <person name="Ganten D."/>
            <person name="Goesele C."/>
            <person name="Hummel O."/>
            <person name="Kreitler T."/>
            <person name="Lee Y.-A."/>
            <person name="Monti J."/>
            <person name="Schulz H."/>
            <person name="Zimdahl H."/>
            <person name="Himmelbauer H."/>
            <person name="Lehrach H."/>
            <person name="Jacob H.J."/>
            <person name="Bromberg S."/>
            <person name="Gullings-Handley J."/>
            <person name="Jensen-Seaman M.I."/>
            <person name="Kwitek A.E."/>
            <person name="Lazar J."/>
            <person name="Pasko D."/>
            <person name="Tonellato P.J."/>
            <person name="Twigger S."/>
            <person name="Ponting C.P."/>
            <person name="Duarte J.M."/>
            <person name="Rice S."/>
            <person name="Goodstadt L."/>
            <person name="Beatson S.A."/>
            <person name="Emes R.D."/>
            <person name="Winter E.E."/>
            <person name="Webber C."/>
            <person name="Brandt P."/>
            <person name="Nyakatura G."/>
            <person name="Adetobi M."/>
            <person name="Chiaromonte F."/>
            <person name="Elnitski L."/>
            <person name="Eswara P."/>
            <person name="Hardison R.C."/>
            <person name="Hou M."/>
            <person name="Kolbe D."/>
            <person name="Makova K."/>
            <person name="Miller W."/>
            <person name="Nekrutenko A."/>
            <person name="Riemer C."/>
            <person name="Schwartz S."/>
            <person name="Taylor J."/>
            <person name="Yang S."/>
            <person name="Zhang Y."/>
            <person name="Lindpaintner K."/>
            <person name="Andrews T.D."/>
            <person name="Caccamo M."/>
            <person name="Clamp M."/>
            <person name="Clarke L."/>
            <person name="Curwen V."/>
            <person name="Durbin R.M."/>
            <person name="Eyras E."/>
            <person name="Searle S.M."/>
            <person name="Cooper G.M."/>
            <person name="Batzoglou S."/>
            <person name="Brudno M."/>
            <person name="Sidow A."/>
            <person name="Stone E.A."/>
            <person name="Payseur B.A."/>
            <person name="Bourque G."/>
            <person name="Lopez-Otin C."/>
            <person name="Puente X.S."/>
            <person name="Chakrabarti K."/>
            <person name="Chatterji S."/>
            <person name="Dewey C."/>
            <person name="Pachter L."/>
            <person name="Bray N."/>
            <person name="Yap V.B."/>
            <person name="Caspi A."/>
            <person name="Tesler G."/>
            <person name="Pevzner P.A."/>
            <person name="Haussler D."/>
            <person name="Roskin K.M."/>
            <person name="Baertsch R."/>
            <person name="Clawson H."/>
            <person name="Furey T.S."/>
            <person name="Hinrichs A.S."/>
            <person name="Karolchik D."/>
            <person name="Kent W.J."/>
            <person name="Rosenbloom K.R."/>
            <person name="Trumbower H."/>
            <person name="Weirauch M."/>
            <person name="Cooper D.N."/>
            <person name="Stenson P.D."/>
            <person name="Ma B."/>
            <person name="Brent M."/>
            <person name="Arumugam M."/>
            <person name="Shteynberg D."/>
            <person name="Copley R.R."/>
            <person name="Taylor M.S."/>
            <person name="Riethman H."/>
            <person name="Mudunuri U."/>
            <person name="Peterson J."/>
            <person name="Guyer M."/>
            <person name="Felsenfeld A."/>
            <person name="Old S."/>
            <person name="Mockrin S."/>
            <person name="Collins F.S."/>
        </authorList>
    </citation>
    <scope>NUCLEOTIDE SEQUENCE [LARGE SCALE GENOMIC DNA]</scope>
    <source>
        <strain>Brown Norway</strain>
    </source>
</reference>
<reference key="2">
    <citation type="submission" date="2005-07" db="EMBL/GenBank/DDBJ databases">
        <authorList>
            <person name="Mural R.J."/>
            <person name="Adams M.D."/>
            <person name="Myers E.W."/>
            <person name="Smith H.O."/>
            <person name="Venter J.C."/>
        </authorList>
    </citation>
    <scope>NUCLEOTIDE SEQUENCE [LARGE SCALE GENOMIC DNA]</scope>
    <source>
        <strain>Brown Norway</strain>
    </source>
</reference>
<reference key="3">
    <citation type="journal article" date="2004" name="Genome Res.">
        <title>The status, quality, and expansion of the NIH full-length cDNA project: the Mammalian Gene Collection (MGC).</title>
        <authorList>
            <consortium name="The MGC Project Team"/>
        </authorList>
    </citation>
    <scope>NUCLEOTIDE SEQUENCE [LARGE SCALE MRNA]</scope>
    <source>
        <tissue>Kidney</tissue>
    </source>
</reference>
<reference key="4">
    <citation type="journal article" date="2003" name="Mol. Cell. Biol.">
        <title>Cortactin is a component of clathrin-coated pits and participates in receptor-mediated endocytosis.</title>
        <authorList>
            <person name="Cao H."/>
            <person name="Orth J.D."/>
            <person name="Chen J."/>
            <person name="Weller S.G."/>
            <person name="Heuser J.E."/>
            <person name="McNiven M.A."/>
        </authorList>
    </citation>
    <scope>FUNCTION</scope>
    <scope>SUBCELLULAR LOCATION</scope>
    <scope>TISSUE SPECIFICITY</scope>
</reference>
<reference key="5">
    <citation type="journal article" date="2002" name="J. Biol. Chem.">
        <title>Tyrosine phosphorylation of Kv1.2 modulates its interaction with the actin-binding protein cortactin.</title>
        <authorList>
            <person name="Hattan D."/>
            <person name="Nesti E."/>
            <person name="Cachero T.G."/>
            <person name="Morielli A.D."/>
        </authorList>
    </citation>
    <scope>INTERACTION WITH KCNA2</scope>
</reference>
<reference key="6">
    <citation type="journal article" date="2007" name="Proc. Natl. Acad. Sci. U.S.A.">
        <title>An essential role for cortactin in the modulation of the potassium channel Kv1.2.</title>
        <authorList>
            <person name="Williams M.R."/>
            <person name="Markey J.C."/>
            <person name="Doczi M.A."/>
            <person name="Morielli A.D."/>
        </authorList>
    </citation>
    <scope>INTERACTION WITH KCNA2</scope>
</reference>
<reference key="7">
    <citation type="journal article" date="2008" name="Am. J. Physiol.">
        <title>Distinct phospho-forms of cortactin differentially regulate actin polymerization and focal adhesions.</title>
        <authorList>
            <person name="Kruchten A.E."/>
            <person name="Krueger E.W."/>
            <person name="Wang Y."/>
            <person name="McNiven M.A."/>
        </authorList>
    </citation>
    <scope>FUNCTION</scope>
    <scope>MUTAGENESIS OF SER-368; SER-381; TYR-384; TYR-429 AND TYR-445</scope>
</reference>
<reference key="8">
    <citation type="journal article" date="2010" name="Mol. Cell. Biol.">
        <title>SRC-mediated phosphorylation of dynamin and cortactin regulates the 'constitutive' endocytosis of transferrin.</title>
        <authorList>
            <person name="Cao H."/>
            <person name="Chen J."/>
            <person name="Krueger E.W."/>
            <person name="McNiven M.A."/>
        </authorList>
    </citation>
    <scope>FUNCTION</scope>
    <scope>SUBCELLULAR LOCATION</scope>
    <scope>PHOSPHORYLATION</scope>
    <scope>MUTAGENESIS OF TYR-384; TYR-429 AND TYR-445</scope>
</reference>
<reference key="9">
    <citation type="journal article" date="2011" name="J. Neurochem.">
        <title>Growth cone morphology and spreading are regulated by a dynamin-cortactin complex at point contacts in hippocampal neurons.</title>
        <authorList>
            <person name="Kurklinsky S."/>
            <person name="Chen J."/>
            <person name="McNiven M.A."/>
        </authorList>
    </citation>
    <scope>FUNCTION</scope>
    <scope>SUBCELLULAR LOCATION</scope>
    <scope>INTERACTION WITH DNM2 AND ACTN1</scope>
</reference>
<reference key="10">
    <citation type="journal article" date="2012" name="J. Biol. Chem.">
        <title>Cortactin controls surface expression of the voltage-gated potassium channel K(V)10.1.</title>
        <authorList>
            <person name="Herrmann S."/>
            <person name="Ninkovic M."/>
            <person name="Kohl T."/>
            <person name="Lorinczi E."/>
            <person name="Pardo L.A."/>
        </authorList>
    </citation>
    <scope>INTERACTION WITH KCNH1</scope>
</reference>
<reference key="11">
    <citation type="journal article" date="2012" name="Nat. Commun.">
        <title>Quantitative maps of protein phosphorylation sites across 14 different rat organs and tissues.</title>
        <authorList>
            <person name="Lundby A."/>
            <person name="Secher A."/>
            <person name="Lage K."/>
            <person name="Nordsborg N.B."/>
            <person name="Dmytriyev A."/>
            <person name="Lundby C."/>
            <person name="Olsen J.V."/>
        </authorList>
    </citation>
    <scope>PHOSPHORYLATION [LARGE SCALE ANALYSIS] AT THR-364; SER-368 AND SER-370</scope>
    <scope>IDENTIFICATION BY MASS SPECTROMETRY [LARGE SCALE ANALYSIS]</scope>
</reference>
<reference key="12">
    <citation type="journal article" date="2012" name="PLoS ONE">
        <title>Cortactin as a target for FAK in the regulation of focal adhesion dynamics.</title>
        <authorList>
            <person name="Tomar A."/>
            <person name="Lawson C."/>
            <person name="Ghassemian M."/>
            <person name="Schlaepfer D.D."/>
        </authorList>
    </citation>
    <scope>FUNCTION</scope>
    <scope>INTERACTION WITH PTK2</scope>
    <scope>PHOSPHORYLATION AT TYR-384; TYR-429 AND TYR-445</scope>
    <scope>SUBCELLULAR LOCATION</scope>
    <scope>IDENTIFICATION BY MASS SPECTROMETRY</scope>
    <scope>MUTAGENESIS OF TYR-384; TYR-429 AND TYR-445</scope>
</reference>
<accession>Q66HL2</accession>
<accession>D3ZRB0</accession>
<protein>
    <recommendedName>
        <fullName>Src substrate cortactin</fullName>
    </recommendedName>
</protein>